<reference key="1">
    <citation type="journal article" date="2001" name="Science">
        <title>Complete genome sequence of a virulent isolate of Streptococcus pneumoniae.</title>
        <authorList>
            <person name="Tettelin H."/>
            <person name="Nelson K.E."/>
            <person name="Paulsen I.T."/>
            <person name="Eisen J.A."/>
            <person name="Read T.D."/>
            <person name="Peterson S.N."/>
            <person name="Heidelberg J.F."/>
            <person name="DeBoy R.T."/>
            <person name="Haft D.H."/>
            <person name="Dodson R.J."/>
            <person name="Durkin A.S."/>
            <person name="Gwinn M.L."/>
            <person name="Kolonay J.F."/>
            <person name="Nelson W.C."/>
            <person name="Peterson J.D."/>
            <person name="Umayam L.A."/>
            <person name="White O."/>
            <person name="Salzberg S.L."/>
            <person name="Lewis M.R."/>
            <person name="Radune D."/>
            <person name="Holtzapple E.K."/>
            <person name="Khouri H.M."/>
            <person name="Wolf A.M."/>
            <person name="Utterback T.R."/>
            <person name="Hansen C.L."/>
            <person name="McDonald L.A."/>
            <person name="Feldblyum T.V."/>
            <person name="Angiuoli S.V."/>
            <person name="Dickinson T."/>
            <person name="Hickey E.K."/>
            <person name="Holt I.E."/>
            <person name="Loftus B.J."/>
            <person name="Yang F."/>
            <person name="Smith H.O."/>
            <person name="Venter J.C."/>
            <person name="Dougherty B.A."/>
            <person name="Morrison D.A."/>
            <person name="Hollingshead S.K."/>
            <person name="Fraser C.M."/>
        </authorList>
    </citation>
    <scope>NUCLEOTIDE SEQUENCE [LARGE SCALE GENOMIC DNA]</scope>
    <source>
        <strain>ATCC BAA-334 / TIGR4</strain>
    </source>
</reference>
<gene>
    <name evidence="1" type="primary">murD</name>
    <name type="ordered locus">SP_0688</name>
</gene>
<keyword id="KW-0067">ATP-binding</keyword>
<keyword id="KW-0131">Cell cycle</keyword>
<keyword id="KW-0132">Cell division</keyword>
<keyword id="KW-0133">Cell shape</keyword>
<keyword id="KW-0961">Cell wall biogenesis/degradation</keyword>
<keyword id="KW-0963">Cytoplasm</keyword>
<keyword id="KW-0436">Ligase</keyword>
<keyword id="KW-0547">Nucleotide-binding</keyword>
<keyword id="KW-0573">Peptidoglycan synthesis</keyword>
<keyword id="KW-1185">Reference proteome</keyword>
<feature type="chain" id="PRO_0000109096" description="UDP-N-acetylmuramoylalanine--D-glutamate ligase">
    <location>
        <begin position="1"/>
        <end position="450"/>
    </location>
</feature>
<feature type="binding site" evidence="1">
    <location>
        <begin position="119"/>
        <end position="125"/>
    </location>
    <ligand>
        <name>ATP</name>
        <dbReference type="ChEBI" id="CHEBI:30616"/>
    </ligand>
</feature>
<proteinExistence type="evidence at protein level"/>
<evidence type="ECO:0000255" key="1">
    <source>
        <dbReference type="HAMAP-Rule" id="MF_00639"/>
    </source>
</evidence>
<sequence>MKVIDQFKNKKVLVLGLAKSGESAARLLDKLGAIVTVNDGKPFEDNPAAQSLLEEGIKVITGGHPLELLDEEFALMVKNPGIPYNNPMIEKALAKGIPVLTEVELAYLISEAPIIGITGSNGKTTTTTMIGEVLTAAGQHGLLSGNIGYPASQVAQIASDKDTLVMELSSFQLMGVQEFHPEIAVITNLMPTHIDYHGSFSEYVAAKWNIQNKMTAADFLVLNFNQDLAKDLTSKTEATVVPFSTLEKVDGAYLEDGQLYFRGEVVMAANEIGVPGSHNVENALATIAVAKLRDVDNQTIKETLSAFGGVKHRLQFVDDIKGVKFYNDSKSTNILATQKALSGFDNSKVVLIAGGLDRGNEFDELVPDITGLKKMVILGQSAERVKRAADKAGVAYVEATDIADATRKAYELATQGDVVLLSPANASWDMYANFEVRGDLFIDTVAELKE</sequence>
<organism>
    <name type="scientific">Streptococcus pneumoniae serotype 4 (strain ATCC BAA-334 / TIGR4)</name>
    <dbReference type="NCBI Taxonomy" id="170187"/>
    <lineage>
        <taxon>Bacteria</taxon>
        <taxon>Bacillati</taxon>
        <taxon>Bacillota</taxon>
        <taxon>Bacilli</taxon>
        <taxon>Lactobacillales</taxon>
        <taxon>Streptococcaceae</taxon>
        <taxon>Streptococcus</taxon>
    </lineage>
</organism>
<accession>Q97RU8</accession>
<dbReference type="EC" id="6.3.2.9" evidence="1"/>
<dbReference type="EMBL" id="AE005672">
    <property type="protein sequence ID" value="AAK74833.1"/>
    <property type="molecule type" value="Genomic_DNA"/>
</dbReference>
<dbReference type="PIR" id="H95079">
    <property type="entry name" value="H95079"/>
</dbReference>
<dbReference type="RefSeq" id="WP_000863037.1">
    <property type="nucleotide sequence ID" value="NZ_CP155539.1"/>
</dbReference>
<dbReference type="SMR" id="Q97RU8"/>
<dbReference type="IntAct" id="Q97RU8">
    <property type="interactions" value="1"/>
</dbReference>
<dbReference type="BindingDB" id="Q97RU8"/>
<dbReference type="ChEMBL" id="CHEMBL4359"/>
<dbReference type="PaxDb" id="170187-SP_0688"/>
<dbReference type="EnsemblBacteria" id="AAK74833">
    <property type="protein sequence ID" value="AAK74833"/>
    <property type="gene ID" value="SP_0688"/>
</dbReference>
<dbReference type="KEGG" id="spn:SP_0688"/>
<dbReference type="eggNOG" id="COG0771">
    <property type="taxonomic scope" value="Bacteria"/>
</dbReference>
<dbReference type="PhylomeDB" id="Q97RU8"/>
<dbReference type="BioCyc" id="SPNE170187:G1FZB-709-MONOMER"/>
<dbReference type="UniPathway" id="UPA00219"/>
<dbReference type="Proteomes" id="UP000000585">
    <property type="component" value="Chromosome"/>
</dbReference>
<dbReference type="GO" id="GO:0005737">
    <property type="term" value="C:cytoplasm"/>
    <property type="evidence" value="ECO:0007669"/>
    <property type="project" value="UniProtKB-SubCell"/>
</dbReference>
<dbReference type="GO" id="GO:0005524">
    <property type="term" value="F:ATP binding"/>
    <property type="evidence" value="ECO:0007669"/>
    <property type="project" value="UniProtKB-UniRule"/>
</dbReference>
<dbReference type="GO" id="GO:0008764">
    <property type="term" value="F:UDP-N-acetylmuramoylalanine-D-glutamate ligase activity"/>
    <property type="evidence" value="ECO:0007669"/>
    <property type="project" value="UniProtKB-UniRule"/>
</dbReference>
<dbReference type="GO" id="GO:0051301">
    <property type="term" value="P:cell division"/>
    <property type="evidence" value="ECO:0007669"/>
    <property type="project" value="UniProtKB-KW"/>
</dbReference>
<dbReference type="GO" id="GO:0071555">
    <property type="term" value="P:cell wall organization"/>
    <property type="evidence" value="ECO:0007669"/>
    <property type="project" value="UniProtKB-KW"/>
</dbReference>
<dbReference type="GO" id="GO:0009252">
    <property type="term" value="P:peptidoglycan biosynthetic process"/>
    <property type="evidence" value="ECO:0007669"/>
    <property type="project" value="UniProtKB-UniRule"/>
</dbReference>
<dbReference type="GO" id="GO:0008360">
    <property type="term" value="P:regulation of cell shape"/>
    <property type="evidence" value="ECO:0007669"/>
    <property type="project" value="UniProtKB-KW"/>
</dbReference>
<dbReference type="Gene3D" id="3.90.190.20">
    <property type="entry name" value="Mur ligase, C-terminal domain"/>
    <property type="match status" value="1"/>
</dbReference>
<dbReference type="Gene3D" id="3.40.1190.10">
    <property type="entry name" value="Mur-like, catalytic domain"/>
    <property type="match status" value="1"/>
</dbReference>
<dbReference type="Gene3D" id="3.40.50.720">
    <property type="entry name" value="NAD(P)-binding Rossmann-like Domain"/>
    <property type="match status" value="1"/>
</dbReference>
<dbReference type="HAMAP" id="MF_00639">
    <property type="entry name" value="MurD"/>
    <property type="match status" value="1"/>
</dbReference>
<dbReference type="InterPro" id="IPR036565">
    <property type="entry name" value="Mur-like_cat_sf"/>
</dbReference>
<dbReference type="InterPro" id="IPR004101">
    <property type="entry name" value="Mur_ligase_C"/>
</dbReference>
<dbReference type="InterPro" id="IPR036615">
    <property type="entry name" value="Mur_ligase_C_dom_sf"/>
</dbReference>
<dbReference type="InterPro" id="IPR013221">
    <property type="entry name" value="Mur_ligase_cen"/>
</dbReference>
<dbReference type="InterPro" id="IPR005762">
    <property type="entry name" value="MurD"/>
</dbReference>
<dbReference type="NCBIfam" id="TIGR01087">
    <property type="entry name" value="murD"/>
    <property type="match status" value="1"/>
</dbReference>
<dbReference type="PANTHER" id="PTHR43692">
    <property type="entry name" value="UDP-N-ACETYLMURAMOYLALANINE--D-GLUTAMATE LIGASE"/>
    <property type="match status" value="1"/>
</dbReference>
<dbReference type="PANTHER" id="PTHR43692:SF1">
    <property type="entry name" value="UDP-N-ACETYLMURAMOYLALANINE--D-GLUTAMATE LIGASE"/>
    <property type="match status" value="1"/>
</dbReference>
<dbReference type="Pfam" id="PF02875">
    <property type="entry name" value="Mur_ligase_C"/>
    <property type="match status" value="1"/>
</dbReference>
<dbReference type="Pfam" id="PF08245">
    <property type="entry name" value="Mur_ligase_M"/>
    <property type="match status" value="1"/>
</dbReference>
<dbReference type="Pfam" id="PF21799">
    <property type="entry name" value="MurD-like_N"/>
    <property type="match status" value="1"/>
</dbReference>
<dbReference type="SUPFAM" id="SSF51984">
    <property type="entry name" value="MurCD N-terminal domain"/>
    <property type="match status" value="1"/>
</dbReference>
<dbReference type="SUPFAM" id="SSF53623">
    <property type="entry name" value="MurD-like peptide ligases, catalytic domain"/>
    <property type="match status" value="1"/>
</dbReference>
<dbReference type="SUPFAM" id="SSF53244">
    <property type="entry name" value="MurD-like peptide ligases, peptide-binding domain"/>
    <property type="match status" value="1"/>
</dbReference>
<name>MURD_STRPN</name>
<protein>
    <recommendedName>
        <fullName evidence="1">UDP-N-acetylmuramoylalanine--D-glutamate ligase</fullName>
        <ecNumber evidence="1">6.3.2.9</ecNumber>
    </recommendedName>
    <alternativeName>
        <fullName evidence="1">D-glutamic acid-adding enzyme</fullName>
    </alternativeName>
    <alternativeName>
        <fullName evidence="1">UDP-N-acetylmuramoyl-L-alanyl-D-glutamate synthetase</fullName>
    </alternativeName>
</protein>
<comment type="function">
    <text evidence="1">Cell wall formation. Catalyzes the addition of glutamate to the nucleotide precursor UDP-N-acetylmuramoyl-L-alanine (UMA).</text>
</comment>
<comment type="catalytic activity">
    <reaction evidence="1">
        <text>UDP-N-acetyl-alpha-D-muramoyl-L-alanine + D-glutamate + ATP = UDP-N-acetyl-alpha-D-muramoyl-L-alanyl-D-glutamate + ADP + phosphate + H(+)</text>
        <dbReference type="Rhea" id="RHEA:16429"/>
        <dbReference type="ChEBI" id="CHEBI:15378"/>
        <dbReference type="ChEBI" id="CHEBI:29986"/>
        <dbReference type="ChEBI" id="CHEBI:30616"/>
        <dbReference type="ChEBI" id="CHEBI:43474"/>
        <dbReference type="ChEBI" id="CHEBI:83898"/>
        <dbReference type="ChEBI" id="CHEBI:83900"/>
        <dbReference type="ChEBI" id="CHEBI:456216"/>
        <dbReference type="EC" id="6.3.2.9"/>
    </reaction>
</comment>
<comment type="pathway">
    <text evidence="1">Cell wall biogenesis; peptidoglycan biosynthesis.</text>
</comment>
<comment type="interaction">
    <interactant intactId="EBI-6473754">
        <id>Q97RU8</id>
    </interactant>
    <interactant intactId="EBI-6473748">
        <id>A0A0H2URL1</id>
        <label>SP_1785</label>
    </interactant>
    <organismsDiffer>false</organismsDiffer>
    <experiments>3</experiments>
</comment>
<comment type="subcellular location">
    <subcellularLocation>
        <location evidence="1">Cytoplasm</location>
    </subcellularLocation>
</comment>
<comment type="similarity">
    <text evidence="1">Belongs to the MurCDEF family.</text>
</comment>